<protein>
    <recommendedName>
        <fullName>Bradykinin-potentiating peptide 11i</fullName>
        <shortName>BPP-11i</shortName>
    </recommendedName>
</protein>
<comment type="function">
    <text evidence="1">This peptide both inhibits the activity of the angiotensin-converting enzyme (ACE) and enhances the action of bradykinin by inhibiting the peptidases that inactivate it. It acts as an indirect hypotensive agent (By similarity).</text>
</comment>
<comment type="subcellular location">
    <subcellularLocation>
        <location>Secreted</location>
    </subcellularLocation>
</comment>
<comment type="tissue specificity">
    <text>Expressed by the venom gland.</text>
</comment>
<comment type="mass spectrometry" mass="1127.7" method="Electrospray" evidence="2"/>
<comment type="similarity">
    <text evidence="3">Belongs to the bradykinin-potentiating peptide family.</text>
</comment>
<keyword id="KW-0903">Direct protein sequencing</keyword>
<keyword id="KW-0382">Hypotensive agent</keyword>
<keyword id="KW-0481">Metalloenzyme inhibitor</keyword>
<keyword id="KW-0483">Metalloprotease inhibitor</keyword>
<keyword id="KW-0646">Protease inhibitor</keyword>
<keyword id="KW-0873">Pyrrolidone carboxylic acid</keyword>
<keyword id="KW-0964">Secreted</keyword>
<keyword id="KW-0800">Toxin</keyword>
<proteinExistence type="evidence at protein level"/>
<organism>
    <name type="scientific">Bothrops jararaca</name>
    <name type="common">Jararaca</name>
    <name type="synonym">Bothrops jajaraca</name>
    <dbReference type="NCBI Taxonomy" id="8724"/>
    <lineage>
        <taxon>Eukaryota</taxon>
        <taxon>Metazoa</taxon>
        <taxon>Chordata</taxon>
        <taxon>Craniata</taxon>
        <taxon>Vertebrata</taxon>
        <taxon>Euteleostomi</taxon>
        <taxon>Lepidosauria</taxon>
        <taxon>Squamata</taxon>
        <taxon>Bifurcata</taxon>
        <taxon>Unidentata</taxon>
        <taxon>Episquamata</taxon>
        <taxon>Toxicofera</taxon>
        <taxon>Serpentes</taxon>
        <taxon>Colubroidea</taxon>
        <taxon>Viperidae</taxon>
        <taxon>Crotalinae</taxon>
        <taxon>Bothrops</taxon>
    </lineage>
</organism>
<sequence length="11" mass="1145">QNGPRPIGIPP</sequence>
<reference key="1">
    <citation type="journal article" date="2012" name="Mol. Cell. Proteomics">
        <title>Peptidomics of three Bothrops snake venoms: insights into the molecular diversification of proteomes and peptidomes.</title>
        <authorList>
            <person name="Tashima A.K."/>
            <person name="Zelanis A."/>
            <person name="Kitano E.S."/>
            <person name="Ianzer D."/>
            <person name="Melo R.L."/>
            <person name="Rioli V."/>
            <person name="Sant'anna S.S."/>
            <person name="Schenberg A.C."/>
            <person name="Camargo A.C."/>
            <person name="Serrano S.M.T."/>
        </authorList>
    </citation>
    <scope>PROTEIN SEQUENCE</scope>
    <scope>PYROGLUTAMATE FORMATION AT GLN-1</scope>
    <scope>MASS SPECTROMETRY</scope>
    <source>
        <tissue>Venom</tissue>
    </source>
</reference>
<evidence type="ECO:0000250" key="1"/>
<evidence type="ECO:0000269" key="2">
    <source>
    </source>
</evidence>
<evidence type="ECO:0000305" key="3"/>
<name>BPPBI_BOTJA</name>
<dbReference type="GO" id="GO:0005576">
    <property type="term" value="C:extracellular region"/>
    <property type="evidence" value="ECO:0007669"/>
    <property type="project" value="UniProtKB-SubCell"/>
</dbReference>
<dbReference type="GO" id="GO:0030414">
    <property type="term" value="F:peptidase inhibitor activity"/>
    <property type="evidence" value="ECO:0007669"/>
    <property type="project" value="UniProtKB-KW"/>
</dbReference>
<dbReference type="GO" id="GO:0090729">
    <property type="term" value="F:toxin activity"/>
    <property type="evidence" value="ECO:0007669"/>
    <property type="project" value="UniProtKB-KW"/>
</dbReference>
<dbReference type="GO" id="GO:0008217">
    <property type="term" value="P:regulation of blood pressure"/>
    <property type="evidence" value="ECO:0007669"/>
    <property type="project" value="UniProtKB-KW"/>
</dbReference>
<feature type="peptide" id="PRO_0000421918" description="Bradykinin-potentiating peptide 11i">
    <location>
        <begin position="1"/>
        <end position="11"/>
    </location>
</feature>
<feature type="modified residue" description="Pyrrolidone carboxylic acid" evidence="2">
    <location>
        <position position="1"/>
    </location>
</feature>
<feature type="unsure residue" description="I or L">
    <location>
        <position position="7"/>
    </location>
</feature>
<feature type="unsure residue" description="I or L">
    <location>
        <position position="9"/>
    </location>
</feature>
<accession>P0DL04</accession>